<proteinExistence type="evidence at protein level"/>
<name>5EAS2_NICAT</name>
<protein>
    <recommendedName>
        <fullName>5-epi-aristolochene synthase 2</fullName>
        <shortName>NaEAS37</shortName>
        <ecNumber>4.2.3.61</ecNumber>
    </recommendedName>
</protein>
<dbReference type="EC" id="4.2.3.61"/>
<dbReference type="EMBL" id="AF484125">
    <property type="protein sequence ID" value="AAP05762.1"/>
    <property type="molecule type" value="mRNA"/>
</dbReference>
<dbReference type="SMR" id="Q84LF0"/>
<dbReference type="BioCyc" id="MetaCyc:EAS37-MONOMER"/>
<dbReference type="BRENDA" id="4.2.3.61">
    <property type="organism ID" value="9729"/>
</dbReference>
<dbReference type="UniPathway" id="UPA00213"/>
<dbReference type="GO" id="GO:0005737">
    <property type="term" value="C:cytoplasm"/>
    <property type="evidence" value="ECO:0007669"/>
    <property type="project" value="UniProtKB-SubCell"/>
</dbReference>
<dbReference type="GO" id="GO:0102698">
    <property type="term" value="F:5-epi-aristolochene synthase activity"/>
    <property type="evidence" value="ECO:0007669"/>
    <property type="project" value="UniProtKB-EC"/>
</dbReference>
<dbReference type="GO" id="GO:0000287">
    <property type="term" value="F:magnesium ion binding"/>
    <property type="evidence" value="ECO:0007669"/>
    <property type="project" value="InterPro"/>
</dbReference>
<dbReference type="GO" id="GO:0010333">
    <property type="term" value="F:terpene synthase activity"/>
    <property type="evidence" value="ECO:0007669"/>
    <property type="project" value="InterPro"/>
</dbReference>
<dbReference type="GO" id="GO:0006952">
    <property type="term" value="P:defense response"/>
    <property type="evidence" value="ECO:0007669"/>
    <property type="project" value="UniProtKB-KW"/>
</dbReference>
<dbReference type="GO" id="GO:0016102">
    <property type="term" value="P:diterpenoid biosynthetic process"/>
    <property type="evidence" value="ECO:0007669"/>
    <property type="project" value="InterPro"/>
</dbReference>
<dbReference type="CDD" id="cd00684">
    <property type="entry name" value="Terpene_cyclase_plant_C1"/>
    <property type="match status" value="1"/>
</dbReference>
<dbReference type="FunFam" id="1.10.600.10:FF:000007">
    <property type="entry name" value="Isoprene synthase, chloroplastic"/>
    <property type="match status" value="1"/>
</dbReference>
<dbReference type="FunFam" id="1.50.10.130:FF:000001">
    <property type="entry name" value="Isoprene synthase, chloroplastic"/>
    <property type="match status" value="1"/>
</dbReference>
<dbReference type="Gene3D" id="1.10.600.10">
    <property type="entry name" value="Farnesyl Diphosphate Synthase"/>
    <property type="match status" value="1"/>
</dbReference>
<dbReference type="Gene3D" id="1.50.10.130">
    <property type="entry name" value="Terpene synthase, N-terminal domain"/>
    <property type="match status" value="1"/>
</dbReference>
<dbReference type="InterPro" id="IPR008949">
    <property type="entry name" value="Isoprenoid_synthase_dom_sf"/>
</dbReference>
<dbReference type="InterPro" id="IPR034741">
    <property type="entry name" value="Terpene_cyclase-like_1_C"/>
</dbReference>
<dbReference type="InterPro" id="IPR044814">
    <property type="entry name" value="Terpene_cyclase_plant_C1"/>
</dbReference>
<dbReference type="InterPro" id="IPR001906">
    <property type="entry name" value="Terpene_synth_N"/>
</dbReference>
<dbReference type="InterPro" id="IPR036965">
    <property type="entry name" value="Terpene_synth_N_sf"/>
</dbReference>
<dbReference type="InterPro" id="IPR050148">
    <property type="entry name" value="Terpene_synthase-like"/>
</dbReference>
<dbReference type="InterPro" id="IPR005630">
    <property type="entry name" value="Terpene_synthase_metal-bd"/>
</dbReference>
<dbReference type="InterPro" id="IPR008930">
    <property type="entry name" value="Terpenoid_cyclase/PrenylTrfase"/>
</dbReference>
<dbReference type="PANTHER" id="PTHR31225:SF93">
    <property type="entry name" value="ALPHA-HUMULENE_(-)-(E)-BETA-CARYOPHYLLENE SYNTHASE"/>
    <property type="match status" value="1"/>
</dbReference>
<dbReference type="PANTHER" id="PTHR31225">
    <property type="entry name" value="OS04G0344100 PROTEIN-RELATED"/>
    <property type="match status" value="1"/>
</dbReference>
<dbReference type="Pfam" id="PF01397">
    <property type="entry name" value="Terpene_synth"/>
    <property type="match status" value="1"/>
</dbReference>
<dbReference type="Pfam" id="PF03936">
    <property type="entry name" value="Terpene_synth_C"/>
    <property type="match status" value="1"/>
</dbReference>
<dbReference type="SFLD" id="SFLDG01019">
    <property type="entry name" value="Terpene_Cyclase_Like_1_C_Termi"/>
    <property type="match status" value="1"/>
</dbReference>
<dbReference type="SFLD" id="SFLDG01604">
    <property type="entry name" value="Terpene_Cyclase_Like_1_C_Termi"/>
    <property type="match status" value="1"/>
</dbReference>
<dbReference type="SFLD" id="SFLDG01014">
    <property type="entry name" value="Terpene_Cyclase_Like_1_N-term"/>
    <property type="match status" value="1"/>
</dbReference>
<dbReference type="SUPFAM" id="SSF48239">
    <property type="entry name" value="Terpenoid cyclases/Protein prenyltransferases"/>
    <property type="match status" value="1"/>
</dbReference>
<dbReference type="SUPFAM" id="SSF48576">
    <property type="entry name" value="Terpenoid synthases"/>
    <property type="match status" value="1"/>
</dbReference>
<keyword id="KW-0963">Cytoplasm</keyword>
<keyword id="KW-0456">Lyase</keyword>
<keyword id="KW-0460">Magnesium</keyword>
<keyword id="KW-0479">Metal-binding</keyword>
<keyword id="KW-0611">Plant defense</keyword>
<sequence>MASAAVANYEEEIVRPVADFSPSLWGDQFLSFSIDNQIAEKYAQEIEALKEQTRSMLLATARKLADTLNLIDTIERLGIAYHFEKEIDEILDQIYNQNSTFDDLCTSALQFRLLRQHGFNISPQIFSKFQDENGKFKESLASDVLGLLNLYEASHVRTHTDNILEDALAFSTVHLESAAPYMNSPLREQVTHALEQCLHKGVPRVETRFFISSIYEKEESKNDMLLRFAKLDFNLLQMLHKQELAEVSRWWKDLNFVTTLPYARDRVVECYFWALGVYFEPQYSQARVMLVKTISMISIVDDTFDAYGTVKELEAYTDAIQRWDINEIDRLPDYMKISYKAILDLYKDYEKELSSAGRSHIVCHAIERMKEVVRNYNVESTWFIEGYKPPVSEYLSNALATTTYYYLATTSYLGMKSVAEQDFEWLSKNPKILEASVIICRVIDDTATYEVEKSRGQIATGIECCMRDYGVSTKEAMDKFQKMAETAWKDLNEGLLRPTPISAEFLTPILNLARIVEVTYIHNLDGYTHPEKVLKPHIIDLLVESIQI</sequence>
<reference key="1">
    <citation type="journal article" date="2002" name="Phytochemistry">
        <title>Gene expression of 5-epi-aristolochene synthase and formation of capsidiol in roots of Nicotiana attenuata and N. sylvestris.</title>
        <authorList>
            <person name="Bohlmann J."/>
            <person name="Stauber E.J."/>
            <person name="Krock B."/>
            <person name="Oldham N.J."/>
            <person name="Gershenzon J."/>
            <person name="Baldwin I.T."/>
        </authorList>
    </citation>
    <scope>NUCLEOTIDE SEQUENCE [MRNA]</scope>
    <scope>FUNCTION</scope>
    <scope>CATALYTIC ACTIVITY</scope>
    <scope>INDUCTION BY HERBIVORY</scope>
    <scope>TISSUE SPECIFICITY</scope>
</reference>
<feature type="chain" id="PRO_0000412245" description="5-epi-aristolochene synthase 2">
    <location>
        <begin position="1"/>
        <end position="548"/>
    </location>
</feature>
<feature type="short sequence motif" description="DDXXD motif">
    <location>
        <begin position="301"/>
        <end position="305"/>
    </location>
</feature>
<feature type="binding site" evidence="1">
    <location>
        <position position="301"/>
    </location>
    <ligand>
        <name>Mg(2+)</name>
        <dbReference type="ChEBI" id="CHEBI:18420"/>
        <label>1</label>
    </ligand>
</feature>
<feature type="binding site" evidence="1">
    <location>
        <position position="301"/>
    </location>
    <ligand>
        <name>Mg(2+)</name>
        <dbReference type="ChEBI" id="CHEBI:18420"/>
        <label>2</label>
    </ligand>
</feature>
<feature type="binding site" evidence="1">
    <location>
        <position position="305"/>
    </location>
    <ligand>
        <name>Mg(2+)</name>
        <dbReference type="ChEBI" id="CHEBI:18420"/>
        <label>1</label>
    </ligand>
</feature>
<feature type="binding site" evidence="1">
    <location>
        <position position="305"/>
    </location>
    <ligand>
        <name>Mg(2+)</name>
        <dbReference type="ChEBI" id="CHEBI:18420"/>
        <label>2</label>
    </ligand>
</feature>
<feature type="binding site" evidence="1">
    <location>
        <position position="444"/>
    </location>
    <ligand>
        <name>Mg(2+)</name>
        <dbReference type="ChEBI" id="CHEBI:18420"/>
        <label>3</label>
    </ligand>
</feature>
<feature type="binding site" evidence="1">
    <location>
        <position position="448"/>
    </location>
    <ligand>
        <name>Mg(2+)</name>
        <dbReference type="ChEBI" id="CHEBI:18420"/>
        <label>3</label>
    </ligand>
</feature>
<feature type="binding site" evidence="1">
    <location>
        <position position="452"/>
    </location>
    <ligand>
        <name>Mg(2+)</name>
        <dbReference type="ChEBI" id="CHEBI:18420"/>
        <label>3</label>
    </ligand>
</feature>
<comment type="function">
    <text evidence="2">Catalyzes the cyclization of trans,trans-farnesyl diphosphate (FPP) to the bicyclic intermediate 5-epi-aristolochene, initial step in the conversion of FPP to the sesquiterpenoid antifungal phytoalexin capsidiol. Produces germacrene A as an enzyme-bound intermediate that is not released by the enzyme, but is further cyclized to produce the bicyclic 5-epi-aristolochene.</text>
</comment>
<comment type="catalytic activity">
    <reaction evidence="2">
        <text>(2E,6E)-farnesyl diphosphate = (+)-5-epi-aristolochene + diphosphate</text>
        <dbReference type="Rhea" id="RHEA:28635"/>
        <dbReference type="ChEBI" id="CHEBI:23925"/>
        <dbReference type="ChEBI" id="CHEBI:33019"/>
        <dbReference type="ChEBI" id="CHEBI:175763"/>
        <dbReference type="EC" id="4.2.3.61"/>
    </reaction>
</comment>
<comment type="cofactor">
    <cofactor evidence="1">
        <name>Mg(2+)</name>
        <dbReference type="ChEBI" id="CHEBI:18420"/>
    </cofactor>
    <text evidence="1">Binds 3 Mg(2+) ions per subunit.</text>
</comment>
<comment type="pathway">
    <text>Secondary metabolite biosynthesis; terpenoid biosynthesis.</text>
</comment>
<comment type="subunit">
    <text evidence="1">Monomer.</text>
</comment>
<comment type="subcellular location">
    <subcellularLocation>
        <location evidence="3">Cytoplasm</location>
    </subcellularLocation>
</comment>
<comment type="tissue specificity">
    <text evidence="2">Expressed in roots, but not in shoots.</text>
</comment>
<comment type="induction">
    <text evidence="2">Up-regulated in shoots upon feeding by insect larvae.</text>
</comment>
<comment type="domain">
    <text evidence="1">The Asp-Asp-Xaa-Xaa-Asp/Glu (DDXXD/E) motif is important for the catalytic activity, presumably through binding to Mg(2+).</text>
</comment>
<comment type="similarity">
    <text evidence="3">Belongs to the terpene synthase family.</text>
</comment>
<evidence type="ECO:0000250" key="1"/>
<evidence type="ECO:0000269" key="2">
    <source>
    </source>
</evidence>
<evidence type="ECO:0000305" key="3"/>
<accession>Q84LF0</accession>
<organism>
    <name type="scientific">Nicotiana attenuata</name>
    <name type="common">Coyote tobacco</name>
    <dbReference type="NCBI Taxonomy" id="49451"/>
    <lineage>
        <taxon>Eukaryota</taxon>
        <taxon>Viridiplantae</taxon>
        <taxon>Streptophyta</taxon>
        <taxon>Embryophyta</taxon>
        <taxon>Tracheophyta</taxon>
        <taxon>Spermatophyta</taxon>
        <taxon>Magnoliopsida</taxon>
        <taxon>eudicotyledons</taxon>
        <taxon>Gunneridae</taxon>
        <taxon>Pentapetalae</taxon>
        <taxon>asterids</taxon>
        <taxon>lamiids</taxon>
        <taxon>Solanales</taxon>
        <taxon>Solanaceae</taxon>
        <taxon>Nicotianoideae</taxon>
        <taxon>Nicotianeae</taxon>
        <taxon>Nicotiana</taxon>
    </lineage>
</organism>